<feature type="chain" id="PRO_1000140189" description="N-acetyl-D-glucosamine kinase">
    <location>
        <begin position="1"/>
        <end position="303"/>
    </location>
</feature>
<feature type="binding site" evidence="1">
    <location>
        <begin position="4"/>
        <end position="11"/>
    </location>
    <ligand>
        <name>ATP</name>
        <dbReference type="ChEBI" id="CHEBI:30616"/>
    </ligand>
</feature>
<feature type="binding site" evidence="1">
    <location>
        <begin position="133"/>
        <end position="140"/>
    </location>
    <ligand>
        <name>ATP</name>
        <dbReference type="ChEBI" id="CHEBI:30616"/>
    </ligand>
</feature>
<feature type="binding site" evidence="1">
    <location>
        <position position="157"/>
    </location>
    <ligand>
        <name>Zn(2+)</name>
        <dbReference type="ChEBI" id="CHEBI:29105"/>
    </ligand>
</feature>
<feature type="binding site" evidence="1">
    <location>
        <position position="177"/>
    </location>
    <ligand>
        <name>Zn(2+)</name>
        <dbReference type="ChEBI" id="CHEBI:29105"/>
    </ligand>
</feature>
<feature type="binding site" evidence="1">
    <location>
        <position position="179"/>
    </location>
    <ligand>
        <name>Zn(2+)</name>
        <dbReference type="ChEBI" id="CHEBI:29105"/>
    </ligand>
</feature>
<feature type="binding site" evidence="1">
    <location>
        <position position="184"/>
    </location>
    <ligand>
        <name>Zn(2+)</name>
        <dbReference type="ChEBI" id="CHEBI:29105"/>
    </ligand>
</feature>
<sequence>MYYGFDIGGTKIALGVFDSGRQLQWEKRVPTPRDSYDAFLDAVCELVAEADQRFGCKGSVGIGIPGMPETEDGTLYAANVPAASGKPLRADLSARLDRDVRLDNDANCFALSEAWDDEFTQYPLVMGLILGTGVGGGLIFNGKPITGKSYITGEFGHMRLPVDALTMMGLDFPLRRCGCGQIGCIENYLSGRGFAWLWQHYYHQPLQAPEIIALWEEGDERAQAHVDRYLDLLAVCLGNILTIVDPDLVVIGGGLSNFTAITTQLADRLPRHLLPVARVPRIERARHGDAGGMRGAAFLHLSD</sequence>
<organism>
    <name type="scientific">Escherichia fergusonii (strain ATCC 35469 / DSM 13698 / CCUG 18766 / IAM 14443 / JCM 21226 / LMG 7866 / NBRC 102419 / NCTC 12128 / CDC 0568-73)</name>
    <dbReference type="NCBI Taxonomy" id="585054"/>
    <lineage>
        <taxon>Bacteria</taxon>
        <taxon>Pseudomonadati</taxon>
        <taxon>Pseudomonadota</taxon>
        <taxon>Gammaproteobacteria</taxon>
        <taxon>Enterobacterales</taxon>
        <taxon>Enterobacteriaceae</taxon>
        <taxon>Escherichia</taxon>
    </lineage>
</organism>
<protein>
    <recommendedName>
        <fullName evidence="1">N-acetyl-D-glucosamine kinase</fullName>
        <ecNumber evidence="1">2.7.1.59</ecNumber>
    </recommendedName>
    <alternativeName>
        <fullName evidence="1">GlcNAc kinase</fullName>
    </alternativeName>
</protein>
<comment type="function">
    <text evidence="1">Catalyzes the phosphorylation of N-acetyl-D-glucosamine (GlcNAc) derived from cell-wall degradation, yielding GlcNAc-6-P.</text>
</comment>
<comment type="catalytic activity">
    <reaction evidence="1">
        <text>N-acetyl-D-glucosamine + ATP = N-acetyl-D-glucosamine 6-phosphate + ADP + H(+)</text>
        <dbReference type="Rhea" id="RHEA:17417"/>
        <dbReference type="ChEBI" id="CHEBI:15378"/>
        <dbReference type="ChEBI" id="CHEBI:30616"/>
        <dbReference type="ChEBI" id="CHEBI:57513"/>
        <dbReference type="ChEBI" id="CHEBI:456216"/>
        <dbReference type="ChEBI" id="CHEBI:506227"/>
        <dbReference type="EC" id="2.7.1.59"/>
    </reaction>
</comment>
<comment type="pathway">
    <text evidence="1">Cell wall biogenesis; peptidoglycan recycling.</text>
</comment>
<comment type="similarity">
    <text evidence="1">Belongs to the ROK (NagC/XylR) family. NagK subfamily.</text>
</comment>
<accession>B7LPQ4</accession>
<proteinExistence type="inferred from homology"/>
<gene>
    <name evidence="1" type="primary">nagK</name>
    <name type="ordered locus">EFER_1283</name>
</gene>
<name>NAGK_ESCF3</name>
<dbReference type="EC" id="2.7.1.59" evidence="1"/>
<dbReference type="EMBL" id="CU928158">
    <property type="protein sequence ID" value="CAQ88807.1"/>
    <property type="molecule type" value="Genomic_DNA"/>
</dbReference>
<dbReference type="RefSeq" id="WP_000291279.1">
    <property type="nucleotide sequence ID" value="NC_011740.1"/>
</dbReference>
<dbReference type="SMR" id="B7LPQ4"/>
<dbReference type="GeneID" id="75057672"/>
<dbReference type="KEGG" id="efe:EFER_1283"/>
<dbReference type="HOGENOM" id="CLU_036604_0_3_6"/>
<dbReference type="OrthoDB" id="9810372at2"/>
<dbReference type="UniPathway" id="UPA00544"/>
<dbReference type="Proteomes" id="UP000000745">
    <property type="component" value="Chromosome"/>
</dbReference>
<dbReference type="GO" id="GO:0005524">
    <property type="term" value="F:ATP binding"/>
    <property type="evidence" value="ECO:0007669"/>
    <property type="project" value="UniProtKB-UniRule"/>
</dbReference>
<dbReference type="GO" id="GO:0045127">
    <property type="term" value="F:N-acetylglucosamine kinase activity"/>
    <property type="evidence" value="ECO:0007669"/>
    <property type="project" value="UniProtKB-UniRule"/>
</dbReference>
<dbReference type="GO" id="GO:0008270">
    <property type="term" value="F:zinc ion binding"/>
    <property type="evidence" value="ECO:0007669"/>
    <property type="project" value="UniProtKB-UniRule"/>
</dbReference>
<dbReference type="GO" id="GO:0006044">
    <property type="term" value="P:N-acetylglucosamine metabolic process"/>
    <property type="evidence" value="ECO:0007669"/>
    <property type="project" value="UniProtKB-UniRule"/>
</dbReference>
<dbReference type="GO" id="GO:0009254">
    <property type="term" value="P:peptidoglycan turnover"/>
    <property type="evidence" value="ECO:0007669"/>
    <property type="project" value="UniProtKB-UniRule"/>
</dbReference>
<dbReference type="CDD" id="cd24057">
    <property type="entry name" value="ASKHA_NBD_ROK_NAGK"/>
    <property type="match status" value="1"/>
</dbReference>
<dbReference type="FunFam" id="3.30.420.40:FF:000049">
    <property type="entry name" value="N-acetyl-D-glucosamine kinase"/>
    <property type="match status" value="1"/>
</dbReference>
<dbReference type="FunFam" id="3.30.420.40:FF:000051">
    <property type="entry name" value="N-acetyl-D-glucosamine kinase"/>
    <property type="match status" value="1"/>
</dbReference>
<dbReference type="Gene3D" id="3.30.420.40">
    <property type="match status" value="2"/>
</dbReference>
<dbReference type="HAMAP" id="MF_01271">
    <property type="entry name" value="GlcNAc_kinase"/>
    <property type="match status" value="1"/>
</dbReference>
<dbReference type="InterPro" id="IPR043129">
    <property type="entry name" value="ATPase_NBD"/>
</dbReference>
<dbReference type="InterPro" id="IPR023505">
    <property type="entry name" value="N-acetyl-D-glucosamine_kinase"/>
</dbReference>
<dbReference type="InterPro" id="IPR000600">
    <property type="entry name" value="ROK"/>
</dbReference>
<dbReference type="InterPro" id="IPR049874">
    <property type="entry name" value="ROK_cs"/>
</dbReference>
<dbReference type="NCBIfam" id="NF009835">
    <property type="entry name" value="PRK13310.1"/>
    <property type="match status" value="1"/>
</dbReference>
<dbReference type="PANTHER" id="PTHR18964:SF162">
    <property type="entry name" value="N-ACETYL-D-GLUCOSAMINE KINASE"/>
    <property type="match status" value="1"/>
</dbReference>
<dbReference type="PANTHER" id="PTHR18964">
    <property type="entry name" value="ROK (REPRESSOR, ORF, KINASE) FAMILY"/>
    <property type="match status" value="1"/>
</dbReference>
<dbReference type="Pfam" id="PF00480">
    <property type="entry name" value="ROK"/>
    <property type="match status" value="1"/>
</dbReference>
<dbReference type="SUPFAM" id="SSF53067">
    <property type="entry name" value="Actin-like ATPase domain"/>
    <property type="match status" value="1"/>
</dbReference>
<dbReference type="PROSITE" id="PS01125">
    <property type="entry name" value="ROK"/>
    <property type="match status" value="1"/>
</dbReference>
<evidence type="ECO:0000255" key="1">
    <source>
        <dbReference type="HAMAP-Rule" id="MF_01271"/>
    </source>
</evidence>
<reference key="1">
    <citation type="journal article" date="2009" name="PLoS Genet.">
        <title>Organised genome dynamics in the Escherichia coli species results in highly diverse adaptive paths.</title>
        <authorList>
            <person name="Touchon M."/>
            <person name="Hoede C."/>
            <person name="Tenaillon O."/>
            <person name="Barbe V."/>
            <person name="Baeriswyl S."/>
            <person name="Bidet P."/>
            <person name="Bingen E."/>
            <person name="Bonacorsi S."/>
            <person name="Bouchier C."/>
            <person name="Bouvet O."/>
            <person name="Calteau A."/>
            <person name="Chiapello H."/>
            <person name="Clermont O."/>
            <person name="Cruveiller S."/>
            <person name="Danchin A."/>
            <person name="Diard M."/>
            <person name="Dossat C."/>
            <person name="Karoui M.E."/>
            <person name="Frapy E."/>
            <person name="Garry L."/>
            <person name="Ghigo J.M."/>
            <person name="Gilles A.M."/>
            <person name="Johnson J."/>
            <person name="Le Bouguenec C."/>
            <person name="Lescat M."/>
            <person name="Mangenot S."/>
            <person name="Martinez-Jehanne V."/>
            <person name="Matic I."/>
            <person name="Nassif X."/>
            <person name="Oztas S."/>
            <person name="Petit M.A."/>
            <person name="Pichon C."/>
            <person name="Rouy Z."/>
            <person name="Ruf C.S."/>
            <person name="Schneider D."/>
            <person name="Tourret J."/>
            <person name="Vacherie B."/>
            <person name="Vallenet D."/>
            <person name="Medigue C."/>
            <person name="Rocha E.P.C."/>
            <person name="Denamur E."/>
        </authorList>
    </citation>
    <scope>NUCLEOTIDE SEQUENCE [LARGE SCALE GENOMIC DNA]</scope>
    <source>
        <strain>ATCC 35469 / DSM 13698 / BCRC 15582 / CCUG 18766 / IAM 14443 / JCM 21226 / LMG 7866 / NBRC 102419 / NCTC 12128 / CDC 0568-73</strain>
    </source>
</reference>
<keyword id="KW-0067">ATP-binding</keyword>
<keyword id="KW-0119">Carbohydrate metabolism</keyword>
<keyword id="KW-0418">Kinase</keyword>
<keyword id="KW-0479">Metal-binding</keyword>
<keyword id="KW-0547">Nucleotide-binding</keyword>
<keyword id="KW-0808">Transferase</keyword>
<keyword id="KW-0862">Zinc</keyword>